<organism>
    <name type="scientific">Allorhizobium ampelinum (strain ATCC BAA-846 / DSM 112012 / S4)</name>
    <name type="common">Agrobacterium vitis (strain S4)</name>
    <dbReference type="NCBI Taxonomy" id="311402"/>
    <lineage>
        <taxon>Bacteria</taxon>
        <taxon>Pseudomonadati</taxon>
        <taxon>Pseudomonadota</taxon>
        <taxon>Alphaproteobacteria</taxon>
        <taxon>Hyphomicrobiales</taxon>
        <taxon>Rhizobiaceae</taxon>
        <taxon>Rhizobium/Agrobacterium group</taxon>
        <taxon>Allorhizobium</taxon>
        <taxon>Allorhizobium ampelinum</taxon>
    </lineage>
</organism>
<evidence type="ECO:0000255" key="1">
    <source>
        <dbReference type="HAMAP-Rule" id="MF_00382"/>
    </source>
</evidence>
<evidence type="ECO:0000305" key="2"/>
<protein>
    <recommendedName>
        <fullName evidence="1">Large ribosomal subunit protein bL20</fullName>
    </recommendedName>
    <alternativeName>
        <fullName evidence="2">50S ribosomal protein L20</fullName>
    </alternativeName>
</protein>
<accession>B9JYM9</accession>
<comment type="function">
    <text evidence="1">Binds directly to 23S ribosomal RNA and is necessary for the in vitro assembly process of the 50S ribosomal subunit. It is not involved in the protein synthesizing functions of that subunit.</text>
</comment>
<comment type="similarity">
    <text evidence="1">Belongs to the bacterial ribosomal protein bL20 family.</text>
</comment>
<name>RL20_ALLAM</name>
<dbReference type="EMBL" id="CP000633">
    <property type="protein sequence ID" value="ACM35125.1"/>
    <property type="molecule type" value="Genomic_DNA"/>
</dbReference>
<dbReference type="RefSeq" id="WP_012654655.1">
    <property type="nucleotide sequence ID" value="NC_011989.1"/>
</dbReference>
<dbReference type="SMR" id="B9JYM9"/>
<dbReference type="STRING" id="311402.Avi_0206"/>
<dbReference type="KEGG" id="avi:Avi_0206"/>
<dbReference type="eggNOG" id="COG0292">
    <property type="taxonomic scope" value="Bacteria"/>
</dbReference>
<dbReference type="HOGENOM" id="CLU_123265_0_1_5"/>
<dbReference type="Proteomes" id="UP000001596">
    <property type="component" value="Chromosome 1"/>
</dbReference>
<dbReference type="GO" id="GO:1990904">
    <property type="term" value="C:ribonucleoprotein complex"/>
    <property type="evidence" value="ECO:0007669"/>
    <property type="project" value="UniProtKB-KW"/>
</dbReference>
<dbReference type="GO" id="GO:0005840">
    <property type="term" value="C:ribosome"/>
    <property type="evidence" value="ECO:0007669"/>
    <property type="project" value="UniProtKB-KW"/>
</dbReference>
<dbReference type="GO" id="GO:0019843">
    <property type="term" value="F:rRNA binding"/>
    <property type="evidence" value="ECO:0007669"/>
    <property type="project" value="UniProtKB-UniRule"/>
</dbReference>
<dbReference type="GO" id="GO:0003735">
    <property type="term" value="F:structural constituent of ribosome"/>
    <property type="evidence" value="ECO:0007669"/>
    <property type="project" value="InterPro"/>
</dbReference>
<dbReference type="GO" id="GO:0000027">
    <property type="term" value="P:ribosomal large subunit assembly"/>
    <property type="evidence" value="ECO:0007669"/>
    <property type="project" value="UniProtKB-UniRule"/>
</dbReference>
<dbReference type="GO" id="GO:0006412">
    <property type="term" value="P:translation"/>
    <property type="evidence" value="ECO:0007669"/>
    <property type="project" value="InterPro"/>
</dbReference>
<dbReference type="CDD" id="cd07026">
    <property type="entry name" value="Ribosomal_L20"/>
    <property type="match status" value="1"/>
</dbReference>
<dbReference type="FunFam" id="1.10.1900.20:FF:000001">
    <property type="entry name" value="50S ribosomal protein L20"/>
    <property type="match status" value="1"/>
</dbReference>
<dbReference type="Gene3D" id="6.10.160.10">
    <property type="match status" value="1"/>
</dbReference>
<dbReference type="Gene3D" id="1.10.1900.20">
    <property type="entry name" value="Ribosomal protein L20"/>
    <property type="match status" value="1"/>
</dbReference>
<dbReference type="HAMAP" id="MF_00382">
    <property type="entry name" value="Ribosomal_bL20"/>
    <property type="match status" value="1"/>
</dbReference>
<dbReference type="InterPro" id="IPR005813">
    <property type="entry name" value="Ribosomal_bL20"/>
</dbReference>
<dbReference type="InterPro" id="IPR049946">
    <property type="entry name" value="RIBOSOMAL_L20_CS"/>
</dbReference>
<dbReference type="InterPro" id="IPR035566">
    <property type="entry name" value="Ribosomal_protein_bL20_C"/>
</dbReference>
<dbReference type="NCBIfam" id="TIGR01032">
    <property type="entry name" value="rplT_bact"/>
    <property type="match status" value="1"/>
</dbReference>
<dbReference type="PANTHER" id="PTHR10986">
    <property type="entry name" value="39S RIBOSOMAL PROTEIN L20"/>
    <property type="match status" value="1"/>
</dbReference>
<dbReference type="Pfam" id="PF00453">
    <property type="entry name" value="Ribosomal_L20"/>
    <property type="match status" value="1"/>
</dbReference>
<dbReference type="PRINTS" id="PR00062">
    <property type="entry name" value="RIBOSOMALL20"/>
</dbReference>
<dbReference type="SUPFAM" id="SSF74731">
    <property type="entry name" value="Ribosomal protein L20"/>
    <property type="match status" value="1"/>
</dbReference>
<dbReference type="PROSITE" id="PS00937">
    <property type="entry name" value="RIBOSOMAL_L20"/>
    <property type="match status" value="1"/>
</dbReference>
<sequence length="134" mass="15020">MSRVKRGVAAHAKHKKVLKAAKGFYGRRKNTIRAAKAAVDRSKQFAYRDRKVNKRNFRALWIQRINAAVRESGLTYGRFIDGLNKAGIEVDRKVLSDMAIHEPAAFGALVEASKKALSYLKDTGTKNEFETAVK</sequence>
<gene>
    <name evidence="1" type="primary">rplT</name>
    <name type="ordered locus">Avi_0206</name>
</gene>
<feature type="chain" id="PRO_1000193930" description="Large ribosomal subunit protein bL20">
    <location>
        <begin position="1"/>
        <end position="134"/>
    </location>
</feature>
<proteinExistence type="inferred from homology"/>
<keyword id="KW-1185">Reference proteome</keyword>
<keyword id="KW-0687">Ribonucleoprotein</keyword>
<keyword id="KW-0689">Ribosomal protein</keyword>
<keyword id="KW-0694">RNA-binding</keyword>
<keyword id="KW-0699">rRNA-binding</keyword>
<reference key="1">
    <citation type="journal article" date="2009" name="J. Bacteriol.">
        <title>Genome sequences of three Agrobacterium biovars help elucidate the evolution of multichromosome genomes in bacteria.</title>
        <authorList>
            <person name="Slater S.C."/>
            <person name="Goldman B.S."/>
            <person name="Goodner B."/>
            <person name="Setubal J.C."/>
            <person name="Farrand S.K."/>
            <person name="Nester E.W."/>
            <person name="Burr T.J."/>
            <person name="Banta L."/>
            <person name="Dickerman A.W."/>
            <person name="Paulsen I."/>
            <person name="Otten L."/>
            <person name="Suen G."/>
            <person name="Welch R."/>
            <person name="Almeida N.F."/>
            <person name="Arnold F."/>
            <person name="Burton O.T."/>
            <person name="Du Z."/>
            <person name="Ewing A."/>
            <person name="Godsy E."/>
            <person name="Heisel S."/>
            <person name="Houmiel K.L."/>
            <person name="Jhaveri J."/>
            <person name="Lu J."/>
            <person name="Miller N.M."/>
            <person name="Norton S."/>
            <person name="Chen Q."/>
            <person name="Phoolcharoen W."/>
            <person name="Ohlin V."/>
            <person name="Ondrusek D."/>
            <person name="Pride N."/>
            <person name="Stricklin S.L."/>
            <person name="Sun J."/>
            <person name="Wheeler C."/>
            <person name="Wilson L."/>
            <person name="Zhu H."/>
            <person name="Wood D.W."/>
        </authorList>
    </citation>
    <scope>NUCLEOTIDE SEQUENCE [LARGE SCALE GENOMIC DNA]</scope>
    <source>
        <strain>ATCC BAA-846 / DSM 112012 / S4</strain>
    </source>
</reference>